<name>RS8_CHRSD</name>
<comment type="function">
    <text evidence="1">One of the primary rRNA binding proteins, it binds directly to 16S rRNA central domain where it helps coordinate assembly of the platform of the 30S subunit.</text>
</comment>
<comment type="subunit">
    <text evidence="1">Part of the 30S ribosomal subunit. Contacts proteins S5 and S12.</text>
</comment>
<comment type="similarity">
    <text evidence="1">Belongs to the universal ribosomal protein uS8 family.</text>
</comment>
<protein>
    <recommendedName>
        <fullName evidence="1">Small ribosomal subunit protein uS8</fullName>
    </recommendedName>
    <alternativeName>
        <fullName evidence="2">30S ribosomal protein S8</fullName>
    </alternativeName>
</protein>
<accession>Q1R0G1</accession>
<reference key="1">
    <citation type="journal article" date="2011" name="Stand. Genomic Sci.">
        <title>Complete genome sequence of the halophilic and highly halotolerant Chromohalobacter salexigens type strain (1H11(T)).</title>
        <authorList>
            <person name="Copeland A."/>
            <person name="O'Connor K."/>
            <person name="Lucas S."/>
            <person name="Lapidus A."/>
            <person name="Berry K.W."/>
            <person name="Detter J.C."/>
            <person name="Del Rio T.G."/>
            <person name="Hammon N."/>
            <person name="Dalin E."/>
            <person name="Tice H."/>
            <person name="Pitluck S."/>
            <person name="Bruce D."/>
            <person name="Goodwin L."/>
            <person name="Han C."/>
            <person name="Tapia R."/>
            <person name="Saunders E."/>
            <person name="Schmutz J."/>
            <person name="Brettin T."/>
            <person name="Larimer F."/>
            <person name="Land M."/>
            <person name="Hauser L."/>
            <person name="Vargas C."/>
            <person name="Nieto J.J."/>
            <person name="Kyrpides N.C."/>
            <person name="Ivanova N."/>
            <person name="Goker M."/>
            <person name="Klenk H.P."/>
            <person name="Csonka L.N."/>
            <person name="Woyke T."/>
        </authorList>
    </citation>
    <scope>NUCLEOTIDE SEQUENCE [LARGE SCALE GENOMIC DNA]</scope>
    <source>
        <strain>ATCC BAA-138 / DSM 3043 / CIP 106854 / NCIMB 13768 / 1H11</strain>
    </source>
</reference>
<feature type="chain" id="PRO_0000290820" description="Small ribosomal subunit protein uS8">
    <location>
        <begin position="1"/>
        <end position="130"/>
    </location>
</feature>
<proteinExistence type="inferred from homology"/>
<keyword id="KW-1185">Reference proteome</keyword>
<keyword id="KW-0687">Ribonucleoprotein</keyword>
<keyword id="KW-0689">Ribosomal protein</keyword>
<keyword id="KW-0694">RNA-binding</keyword>
<keyword id="KW-0699">rRNA-binding</keyword>
<sequence length="130" mass="14199">MSMQDTLADMFTRIRNAQMATKETVTMPSSNLKTEVARVLKQEGYINDFTVTEGAKPQLAVTLKYFEGKPVIEHIQRFSKPSLRSYKGKDALPKVADGLGIAIVTTSQGVMTDRAARQAGVGGEVICTVF</sequence>
<organism>
    <name type="scientific">Chromohalobacter salexigens (strain ATCC BAA-138 / DSM 3043 / CIP 106854 / NCIMB 13768 / 1H11)</name>
    <dbReference type="NCBI Taxonomy" id="290398"/>
    <lineage>
        <taxon>Bacteria</taxon>
        <taxon>Pseudomonadati</taxon>
        <taxon>Pseudomonadota</taxon>
        <taxon>Gammaproteobacteria</taxon>
        <taxon>Oceanospirillales</taxon>
        <taxon>Halomonadaceae</taxon>
        <taxon>Chromohalobacter</taxon>
    </lineage>
</organism>
<dbReference type="EMBL" id="CP000285">
    <property type="protein sequence ID" value="ABE57797.1"/>
    <property type="molecule type" value="Genomic_DNA"/>
</dbReference>
<dbReference type="RefSeq" id="WP_011505743.1">
    <property type="nucleotide sequence ID" value="NC_007963.1"/>
</dbReference>
<dbReference type="SMR" id="Q1R0G1"/>
<dbReference type="STRING" id="290398.Csal_0435"/>
<dbReference type="GeneID" id="95333188"/>
<dbReference type="KEGG" id="csa:Csal_0435"/>
<dbReference type="eggNOG" id="COG0096">
    <property type="taxonomic scope" value="Bacteria"/>
</dbReference>
<dbReference type="HOGENOM" id="CLU_098428_0_0_6"/>
<dbReference type="OrthoDB" id="9802617at2"/>
<dbReference type="Proteomes" id="UP000000239">
    <property type="component" value="Chromosome"/>
</dbReference>
<dbReference type="GO" id="GO:1990904">
    <property type="term" value="C:ribonucleoprotein complex"/>
    <property type="evidence" value="ECO:0007669"/>
    <property type="project" value="UniProtKB-KW"/>
</dbReference>
<dbReference type="GO" id="GO:0005840">
    <property type="term" value="C:ribosome"/>
    <property type="evidence" value="ECO:0007669"/>
    <property type="project" value="UniProtKB-KW"/>
</dbReference>
<dbReference type="GO" id="GO:0019843">
    <property type="term" value="F:rRNA binding"/>
    <property type="evidence" value="ECO:0007669"/>
    <property type="project" value="UniProtKB-UniRule"/>
</dbReference>
<dbReference type="GO" id="GO:0003735">
    <property type="term" value="F:structural constituent of ribosome"/>
    <property type="evidence" value="ECO:0007669"/>
    <property type="project" value="InterPro"/>
</dbReference>
<dbReference type="GO" id="GO:0006412">
    <property type="term" value="P:translation"/>
    <property type="evidence" value="ECO:0007669"/>
    <property type="project" value="UniProtKB-UniRule"/>
</dbReference>
<dbReference type="FunFam" id="3.30.1370.30:FF:000002">
    <property type="entry name" value="30S ribosomal protein S8"/>
    <property type="match status" value="1"/>
</dbReference>
<dbReference type="FunFam" id="3.30.1490.10:FF:000001">
    <property type="entry name" value="30S ribosomal protein S8"/>
    <property type="match status" value="1"/>
</dbReference>
<dbReference type="Gene3D" id="3.30.1370.30">
    <property type="match status" value="1"/>
</dbReference>
<dbReference type="Gene3D" id="3.30.1490.10">
    <property type="match status" value="1"/>
</dbReference>
<dbReference type="HAMAP" id="MF_01302_B">
    <property type="entry name" value="Ribosomal_uS8_B"/>
    <property type="match status" value="1"/>
</dbReference>
<dbReference type="InterPro" id="IPR000630">
    <property type="entry name" value="Ribosomal_uS8"/>
</dbReference>
<dbReference type="InterPro" id="IPR047863">
    <property type="entry name" value="Ribosomal_uS8_CS"/>
</dbReference>
<dbReference type="InterPro" id="IPR035987">
    <property type="entry name" value="Ribosomal_uS8_sf"/>
</dbReference>
<dbReference type="NCBIfam" id="NF001109">
    <property type="entry name" value="PRK00136.1"/>
    <property type="match status" value="1"/>
</dbReference>
<dbReference type="PANTHER" id="PTHR11758">
    <property type="entry name" value="40S RIBOSOMAL PROTEIN S15A"/>
    <property type="match status" value="1"/>
</dbReference>
<dbReference type="Pfam" id="PF00410">
    <property type="entry name" value="Ribosomal_S8"/>
    <property type="match status" value="1"/>
</dbReference>
<dbReference type="SUPFAM" id="SSF56047">
    <property type="entry name" value="Ribosomal protein S8"/>
    <property type="match status" value="1"/>
</dbReference>
<dbReference type="PROSITE" id="PS00053">
    <property type="entry name" value="RIBOSOMAL_S8"/>
    <property type="match status" value="1"/>
</dbReference>
<gene>
    <name evidence="1" type="primary">rpsH</name>
    <name type="ordered locus">Csal_0435</name>
</gene>
<evidence type="ECO:0000255" key="1">
    <source>
        <dbReference type="HAMAP-Rule" id="MF_01302"/>
    </source>
</evidence>
<evidence type="ECO:0000305" key="2"/>